<dbReference type="EMBL" id="AB047240">
    <property type="protein sequence ID" value="BAB11759.1"/>
    <property type="molecule type" value="Genomic_DNA"/>
</dbReference>
<dbReference type="SMR" id="Q9HDB9"/>
<dbReference type="GlyGen" id="Q9HDB9">
    <property type="glycosylation" value="1 site, 1 O-linked glycan (1 site)"/>
</dbReference>
<dbReference type="iPTMnet" id="Q9HDB9"/>
<dbReference type="PhosphoSitePlus" id="Q9HDB9"/>
<dbReference type="BioMuta" id="HGNC:13757"/>
<dbReference type="DMDM" id="50400656"/>
<dbReference type="jPOST" id="Q9HDB9"/>
<dbReference type="MassIVE" id="Q9HDB9"/>
<dbReference type="ProteomicsDB" id="81849">
    <molecule id="Q9HDB9-1"/>
</dbReference>
<dbReference type="AGR" id="HGNC:13757"/>
<dbReference type="GeneCards" id="ERVK-5"/>
<dbReference type="HGNC" id="HGNC:13757">
    <property type="gene designation" value="ERVK-5"/>
</dbReference>
<dbReference type="MIM" id="614012">
    <property type="type" value="gene"/>
</dbReference>
<dbReference type="neXtProt" id="NX_Q9HDB9"/>
<dbReference type="GeneTree" id="ENSGT00940000162994"/>
<dbReference type="InParanoid" id="Q9HDB9"/>
<dbReference type="PAN-GO" id="Q9HDB9">
    <property type="GO annotations" value="0 GO annotations based on evolutionary models"/>
</dbReference>
<dbReference type="PhylomeDB" id="Q9HDB9"/>
<dbReference type="Pharos" id="Q9HDB9">
    <property type="development level" value="Tdark"/>
</dbReference>
<dbReference type="Proteomes" id="UP000005640">
    <property type="component" value="Unplaced"/>
</dbReference>
<dbReference type="RNAct" id="Q9HDB9">
    <property type="molecule type" value="protein"/>
</dbReference>
<dbReference type="GO" id="GO:0005886">
    <property type="term" value="C:plasma membrane"/>
    <property type="evidence" value="ECO:0007669"/>
    <property type="project" value="UniProtKB-SubCell"/>
</dbReference>
<dbReference type="GO" id="GO:0003676">
    <property type="term" value="F:nucleic acid binding"/>
    <property type="evidence" value="ECO:0007669"/>
    <property type="project" value="InterPro"/>
</dbReference>
<dbReference type="GO" id="GO:0005198">
    <property type="term" value="F:structural molecule activity"/>
    <property type="evidence" value="ECO:0007669"/>
    <property type="project" value="InterPro"/>
</dbReference>
<dbReference type="GO" id="GO:0008270">
    <property type="term" value="F:zinc ion binding"/>
    <property type="evidence" value="ECO:0007669"/>
    <property type="project" value="UniProtKB-KW"/>
</dbReference>
<dbReference type="GO" id="GO:0075523">
    <property type="term" value="P:viral translational frameshifting"/>
    <property type="evidence" value="ECO:0007669"/>
    <property type="project" value="UniProtKB-KW"/>
</dbReference>
<dbReference type="Gene3D" id="1.10.1200.30">
    <property type="match status" value="1"/>
</dbReference>
<dbReference type="Gene3D" id="1.10.375.10">
    <property type="entry name" value="Human Immunodeficiency Virus Type 1 Capsid Protein"/>
    <property type="match status" value="1"/>
</dbReference>
<dbReference type="Gene3D" id="1.10.150.490">
    <property type="entry name" value="Retroviral GAG p10 protein"/>
    <property type="match status" value="1"/>
</dbReference>
<dbReference type="Gene3D" id="4.10.60.10">
    <property type="entry name" value="Zinc finger, CCHC-type"/>
    <property type="match status" value="1"/>
</dbReference>
<dbReference type="InterPro" id="IPR003322">
    <property type="entry name" value="B_retro_matrix"/>
</dbReference>
<dbReference type="InterPro" id="IPR038124">
    <property type="entry name" value="B_retro_matrix_sf"/>
</dbReference>
<dbReference type="InterPro" id="IPR045345">
    <property type="entry name" value="Gag_p24_C"/>
</dbReference>
<dbReference type="InterPro" id="IPR050195">
    <property type="entry name" value="Primate_lentivir_Gag_pol-like"/>
</dbReference>
<dbReference type="InterPro" id="IPR008916">
    <property type="entry name" value="Retrov_capsid_C"/>
</dbReference>
<dbReference type="InterPro" id="IPR008919">
    <property type="entry name" value="Retrov_capsid_N"/>
</dbReference>
<dbReference type="InterPro" id="IPR010999">
    <property type="entry name" value="Retrovr_matrix"/>
</dbReference>
<dbReference type="InterPro" id="IPR001878">
    <property type="entry name" value="Znf_CCHC"/>
</dbReference>
<dbReference type="InterPro" id="IPR036875">
    <property type="entry name" value="Znf_CCHC_sf"/>
</dbReference>
<dbReference type="PANTHER" id="PTHR40389">
    <property type="entry name" value="ENDOGENOUS RETROVIRUS GROUP K MEMBER 24 GAG POLYPROTEIN-RELATED"/>
    <property type="match status" value="1"/>
</dbReference>
<dbReference type="PANTHER" id="PTHR40389:SF2">
    <property type="entry name" value="ENDOGENOUS RETROVIRUS GROUP K MEMBER 24 GAG POLYPROTEIN-RELATED"/>
    <property type="match status" value="1"/>
</dbReference>
<dbReference type="Pfam" id="PF02337">
    <property type="entry name" value="Gag_p10"/>
    <property type="match status" value="1"/>
</dbReference>
<dbReference type="Pfam" id="PF00607">
    <property type="entry name" value="Gag_p24"/>
    <property type="match status" value="1"/>
</dbReference>
<dbReference type="Pfam" id="PF19317">
    <property type="entry name" value="Gag_p24_C"/>
    <property type="match status" value="1"/>
</dbReference>
<dbReference type="Pfam" id="PF00098">
    <property type="entry name" value="zf-CCHC"/>
    <property type="match status" value="1"/>
</dbReference>
<dbReference type="Pfam" id="PF14787">
    <property type="entry name" value="zf-CCHC_5"/>
    <property type="match status" value="1"/>
</dbReference>
<dbReference type="SMART" id="SM00343">
    <property type="entry name" value="ZnF_C2HC"/>
    <property type="match status" value="2"/>
</dbReference>
<dbReference type="SUPFAM" id="SSF47836">
    <property type="entry name" value="Retroviral matrix proteins"/>
    <property type="match status" value="1"/>
</dbReference>
<dbReference type="SUPFAM" id="SSF47353">
    <property type="entry name" value="Retrovirus capsid dimerization domain-like"/>
    <property type="match status" value="1"/>
</dbReference>
<dbReference type="SUPFAM" id="SSF47943">
    <property type="entry name" value="Retrovirus capsid protein, N-terminal core domain"/>
    <property type="match status" value="1"/>
</dbReference>
<dbReference type="SUPFAM" id="SSF57756">
    <property type="entry name" value="Retrovirus zinc finger-like domains"/>
    <property type="match status" value="2"/>
</dbReference>
<dbReference type="PROSITE" id="PS50158">
    <property type="entry name" value="ZF_CCHC"/>
    <property type="match status" value="1"/>
</dbReference>
<accession>Q9HDB9</accession>
<organism>
    <name type="scientific">Homo sapiens</name>
    <name type="common">Human</name>
    <dbReference type="NCBI Taxonomy" id="9606"/>
    <lineage>
        <taxon>Eukaryota</taxon>
        <taxon>Metazoa</taxon>
        <taxon>Chordata</taxon>
        <taxon>Craniata</taxon>
        <taxon>Vertebrata</taxon>
        <taxon>Euteleostomi</taxon>
        <taxon>Mammalia</taxon>
        <taxon>Eutheria</taxon>
        <taxon>Euarchontoglires</taxon>
        <taxon>Primates</taxon>
        <taxon>Haplorrhini</taxon>
        <taxon>Catarrhini</taxon>
        <taxon>Hominidae</taxon>
        <taxon>Homo</taxon>
    </lineage>
</organism>
<gene>
    <name type="primary">ERVK-5</name>
    <name type="synonym">ERVK5</name>
</gene>
<sequence length="667" mass="73588">MGQTKSKTKSKYASYLSFIKILLKRGGVRVSTKNLIKLFQIIEQFCPWFPEQGTLDLKDWKRIGEELKQAGRKGNIIPLTVWNDWAIIKAALEPFQTKEDSVSVSDAPGSCVIDCNEKTGRKSQKETESLHCEYVTEPVMAQSTQNVDYNQLQGVIYPETLKLEGKGPELVGPSESKPRGPSPLPAGQVPVTLQPQTQVKENKTQPPVAYQYWPPAELQYLPPPESQYGYPGMPPALQGRAPYPQPPTVRLNPTASRSGQGGTLHAVIDEARKQGDLEAWRFLVILQLVQAGEETQVGAPARAETRCEPFTMKMLKDIKEGVKQYGSNSPYIRTLLDSIAHGNRLTPYDWESLAKSSLSSSQYLQFKTWWIDGVQEQVRKNQATKPTVNIDADQLLGTGPNWSTINQQSVMQNEAIEQVRAICLRAWGKIQDPGTAFPINSIRQGSKEPYPDFVARLQDAAQKSITDDNARKVIVELMAYENANPECQSAIKPLKGKVPAGVDVITEYVKACDGIGGAMHKAMLMAQAMRGLTLGGQVRTFGKKCYNCGQIGHLKRSCPVLNKQNIINQAITAKNKKPSGLCPKCGKGKHWANQCHSKFDKDGQPLSGNRKRGQPQAPQQTGAFPVQLFVPQGFQGQQPLQKIPPLQGVSQLQQSNSCPAPQQAAPQ</sequence>
<comment type="function">
    <text>The products of the Gag polyproteins of infectious retroviruses perform highly complex orchestrated tasks during the assembly, budding, maturation, and infection stages of the viral replication cycle. During viral assembly, the proteins form membrane associations and self-associations that ultimately result in budding of an immature virion from the infected cell. Gag precursors also function during viral assembly to selectively bind and package two plus strands of genomic RNA. Endogenous Gag proteins may have kept, lost or modified their original function during evolution.</text>
</comment>
<comment type="subcellular location">
    <subcellularLocation>
        <location>Cell membrane</location>
        <topology>Lipid-anchor</topology>
    </subcellularLocation>
    <text evidence="1">Cytoplasmic membrane (in a transfection system).</text>
</comment>
<comment type="alternative products">
    <event type="ribosomal frameshifting"/>
    <isoform>
        <id>Q9HDB9-1</id>
        <name>1</name>
        <sequence type="displayed"/>
    </isoform>
    <text>This protein is synthesized as a Gag polypeptide and as a Gag-Pro-Pol polyprotein. The later is the precursor of the Pro and Pol proteins. It is thought, by similarity with type-B retroviruses, to be generated by -1 frameshifts occurring at the Gag-Pro and Pro-Pol genes boundaries.</text>
</comment>
<comment type="domain">
    <text>HERV-K Gag polyprotein contains regions homologous to the matrix (MA), capsid (CA) and nucleocapsid (NC) proteins from infectious retroviruses. Evidence suggests that HERV-K(HML-2) Gag polyprotein can be cleaved into mature MA, CA and NC under certain circumstances. However, the exact boundaries as well as the size of processed Gag proteins have not been precisely determined yet.</text>
</comment>
<comment type="PTM">
    <text evidence="1">Myristoylation is essential for retroviral assembly. Alteration of the glycine residue leads to a block in the budding of particles and an accumulation of Gag inside the cell (By similarity).</text>
</comment>
<comment type="PTM">
    <text evidence="5">Specific enzymatic cleavages may yield mature proteins.</text>
</comment>
<comment type="miscellaneous">
    <text>Intergenic, closest flanking genes being RPL24 and FLJ23047.</text>
</comment>
<comment type="similarity">
    <text evidence="5">Belongs to the beta type-B retroviral Gag protein family. HERV class-II K(HML-2) gag subfamily.</text>
</comment>
<keyword id="KW-1003">Cell membrane</keyword>
<keyword id="KW-0895">ERV</keyword>
<keyword id="KW-0449">Lipoprotein</keyword>
<keyword id="KW-0472">Membrane</keyword>
<keyword id="KW-0479">Metal-binding</keyword>
<keyword id="KW-0519">Myristate</keyword>
<keyword id="KW-1267">Proteomics identification</keyword>
<keyword id="KW-1185">Reference proteome</keyword>
<keyword id="KW-0677">Repeat</keyword>
<keyword id="KW-0688">Ribosomal frameshifting</keyword>
<keyword id="KW-0814">Transposable element</keyword>
<keyword id="KW-0862">Zinc</keyword>
<keyword id="KW-0863">Zinc-finger</keyword>
<name>GAK5_HUMAN</name>
<feature type="initiator methionine" description="Removed" evidence="2">
    <location>
        <position position="1"/>
    </location>
</feature>
<feature type="chain" id="PRO_0000186751" description="Endogenous retrovirus group K member 5 Gag polyprotein">
    <location>
        <begin position="2"/>
        <end position="667"/>
    </location>
</feature>
<feature type="zinc finger region" description="CCHC-type 1" evidence="3">
    <location>
        <begin position="543"/>
        <end position="560"/>
    </location>
</feature>
<feature type="zinc finger region" description="CCHC-type 2" evidence="3">
    <location>
        <begin position="580"/>
        <end position="597"/>
    </location>
</feature>
<feature type="region of interest" description="Disordered" evidence="4">
    <location>
        <begin position="166"/>
        <end position="188"/>
    </location>
</feature>
<feature type="region of interest" description="Disordered" evidence="4">
    <location>
        <begin position="598"/>
        <end position="667"/>
    </location>
</feature>
<feature type="compositionally biased region" description="Polar residues" evidence="4">
    <location>
        <begin position="648"/>
        <end position="667"/>
    </location>
</feature>
<feature type="lipid moiety-binding region" description="N-myristoyl glycine" evidence="2">
    <location>
        <position position="2"/>
    </location>
</feature>
<protein>
    <recommendedName>
        <fullName>Endogenous retrovirus group K member 5 Gag polyprotein</fullName>
    </recommendedName>
    <alternativeName>
        <fullName>HERV-K(II) Gag protein</fullName>
    </alternativeName>
    <alternativeName>
        <fullName>HERV-K_3q12.3 provirus ancestral Gag polyprotein</fullName>
        <shortName>Gag polyprotein</shortName>
    </alternativeName>
</protein>
<evidence type="ECO:0000250" key="1"/>
<evidence type="ECO:0000255" key="2"/>
<evidence type="ECO:0000255" key="3">
    <source>
        <dbReference type="PROSITE-ProRule" id="PRU00047"/>
    </source>
</evidence>
<evidence type="ECO:0000256" key="4">
    <source>
        <dbReference type="SAM" id="MobiDB-lite"/>
    </source>
</evidence>
<evidence type="ECO:0000305" key="5"/>
<reference key="1">
    <citation type="journal article" date="2001" name="Genomics">
        <title>Transcriptionally active HERV-K genes: identification, isolation, and chromosomal mapping.</title>
        <authorList>
            <person name="Sugimoto J."/>
            <person name="Matsuura N."/>
            <person name="Kinjo Y."/>
            <person name="Takasu N."/>
            <person name="Oda T."/>
            <person name="Jinno Y."/>
        </authorList>
    </citation>
    <scope>NUCLEOTIDE SEQUENCE [GENOMIC DNA]</scope>
</reference>
<reference key="2">
    <citation type="journal article" date="1995" name="J. Virol.">
        <title>Human endogenous retrovirus K10: expression of Gag protein and detection of antibodies in patients with seminomas.</title>
        <authorList>
            <person name="Sauter M."/>
            <person name="Schommer S."/>
            <person name="Kremmer E."/>
            <person name="Remberger K."/>
            <person name="Doelken G."/>
            <person name="Lemm I."/>
            <person name="Buck M."/>
            <person name="Best B."/>
            <person name="Neumann-Haefelin D."/>
            <person name="Mueller-Lantzsch N."/>
        </authorList>
    </citation>
    <scope>CHARACTERIZATION</scope>
</reference>
<proteinExistence type="evidence at protein level"/>